<accession>A6VMI2</accession>
<protein>
    <recommendedName>
        <fullName evidence="1">Dual-action ribosomal maturation protein DarP</fullName>
    </recommendedName>
    <alternativeName>
        <fullName evidence="1">Large ribosomal subunit assembly factor DarP</fullName>
    </alternativeName>
</protein>
<name>DARP_ACTSZ</name>
<dbReference type="EMBL" id="CP000746">
    <property type="protein sequence ID" value="ABR74179.1"/>
    <property type="molecule type" value="Genomic_DNA"/>
</dbReference>
<dbReference type="RefSeq" id="WP_012072557.1">
    <property type="nucleotide sequence ID" value="NC_009655.1"/>
</dbReference>
<dbReference type="SMR" id="A6VMI2"/>
<dbReference type="STRING" id="339671.Asuc_0809"/>
<dbReference type="KEGG" id="asu:Asuc_0809"/>
<dbReference type="eggNOG" id="COG3028">
    <property type="taxonomic scope" value="Bacteria"/>
</dbReference>
<dbReference type="HOGENOM" id="CLU_106757_2_0_6"/>
<dbReference type="OrthoDB" id="5293604at2"/>
<dbReference type="Proteomes" id="UP000001114">
    <property type="component" value="Chromosome"/>
</dbReference>
<dbReference type="GO" id="GO:0005829">
    <property type="term" value="C:cytosol"/>
    <property type="evidence" value="ECO:0007669"/>
    <property type="project" value="TreeGrafter"/>
</dbReference>
<dbReference type="GO" id="GO:0043022">
    <property type="term" value="F:ribosome binding"/>
    <property type="evidence" value="ECO:0007669"/>
    <property type="project" value="UniProtKB-UniRule"/>
</dbReference>
<dbReference type="GO" id="GO:0019843">
    <property type="term" value="F:rRNA binding"/>
    <property type="evidence" value="ECO:0007669"/>
    <property type="project" value="UniProtKB-UniRule"/>
</dbReference>
<dbReference type="GO" id="GO:1902626">
    <property type="term" value="P:assembly of large subunit precursor of preribosome"/>
    <property type="evidence" value="ECO:0007669"/>
    <property type="project" value="UniProtKB-UniRule"/>
</dbReference>
<dbReference type="CDD" id="cd16331">
    <property type="entry name" value="YjgA-like"/>
    <property type="match status" value="1"/>
</dbReference>
<dbReference type="Gene3D" id="1.10.60.30">
    <property type="entry name" value="PSPTO4464-like domains"/>
    <property type="match status" value="2"/>
</dbReference>
<dbReference type="HAMAP" id="MF_00765">
    <property type="entry name" value="DarP"/>
    <property type="match status" value="1"/>
</dbReference>
<dbReference type="InterPro" id="IPR006839">
    <property type="entry name" value="DarP"/>
</dbReference>
<dbReference type="InterPro" id="IPR023153">
    <property type="entry name" value="DarP_sf"/>
</dbReference>
<dbReference type="NCBIfam" id="NF003593">
    <property type="entry name" value="PRK05255.1-1"/>
    <property type="match status" value="1"/>
</dbReference>
<dbReference type="PANTHER" id="PTHR38101">
    <property type="entry name" value="UPF0307 PROTEIN YJGA"/>
    <property type="match status" value="1"/>
</dbReference>
<dbReference type="PANTHER" id="PTHR38101:SF1">
    <property type="entry name" value="UPF0307 PROTEIN YJGA"/>
    <property type="match status" value="1"/>
</dbReference>
<dbReference type="Pfam" id="PF04751">
    <property type="entry name" value="DarP"/>
    <property type="match status" value="1"/>
</dbReference>
<dbReference type="PIRSF" id="PIRSF016183">
    <property type="entry name" value="UCP016183"/>
    <property type="match status" value="1"/>
</dbReference>
<dbReference type="SUPFAM" id="SSF158710">
    <property type="entry name" value="PSPTO4464-like"/>
    <property type="match status" value="1"/>
</dbReference>
<comment type="function">
    <text evidence="1">Member of a network of 50S ribosomal subunit biogenesis factors which assembles along the 30S-50S interface, preventing incorrect 23S rRNA structures from forming. Promotes peptidyl transferase center (PTC) maturation.</text>
</comment>
<comment type="subcellular location">
    <subcellularLocation>
        <location evidence="1">Cytoplasm</location>
    </subcellularLocation>
    <text evidence="1">Associates with late stage pre-50S ribosomal subunits.</text>
</comment>
<comment type="similarity">
    <text evidence="1">Belongs to the DarP family.</text>
</comment>
<feature type="chain" id="PRO_1000072832" description="Dual-action ribosomal maturation protein DarP">
    <location>
        <begin position="1"/>
        <end position="181"/>
    </location>
</feature>
<sequence length="181" mass="21304">MKKRGKKPELDWTDDEQEEIIWVSKSEIKRDAEELKKLGARLVELSQANLDKITLAETLLDAVNLARRSVKEAKRRQLQFIGKLLRSATEDEINHIRESLDKIANKHNQQQAMLHKLEQLRDELVVGDDEVLTKFYDEYPQADRQHLRNLVRAAKKEKEQNKAPKAYREIYQYLKDLILSD</sequence>
<evidence type="ECO:0000255" key="1">
    <source>
        <dbReference type="HAMAP-Rule" id="MF_00765"/>
    </source>
</evidence>
<reference key="1">
    <citation type="journal article" date="2010" name="BMC Genomics">
        <title>A genomic perspective on the potential of Actinobacillus succinogenes for industrial succinate production.</title>
        <authorList>
            <person name="McKinlay J.B."/>
            <person name="Laivenieks M."/>
            <person name="Schindler B.D."/>
            <person name="McKinlay A.A."/>
            <person name="Siddaramappa S."/>
            <person name="Challacombe J.F."/>
            <person name="Lowry S.R."/>
            <person name="Clum A."/>
            <person name="Lapidus A.L."/>
            <person name="Burkhart K.B."/>
            <person name="Harkins V."/>
            <person name="Vieille C."/>
        </authorList>
    </citation>
    <scope>NUCLEOTIDE SEQUENCE [LARGE SCALE GENOMIC DNA]</scope>
    <source>
        <strain>ATCC 55618 / DSM 22257 / CCUG 43843 / 130Z</strain>
    </source>
</reference>
<proteinExistence type="inferred from homology"/>
<gene>
    <name evidence="1" type="primary">darP</name>
    <name type="ordered locus">Asuc_0809</name>
</gene>
<keyword id="KW-0963">Cytoplasm</keyword>
<keyword id="KW-1185">Reference proteome</keyword>
<keyword id="KW-0690">Ribosome biogenesis</keyword>
<keyword id="KW-0694">RNA-binding</keyword>
<keyword id="KW-0699">rRNA-binding</keyword>
<organism>
    <name type="scientific">Actinobacillus succinogenes (strain ATCC 55618 / DSM 22257 / CCUG 43843 / 130Z)</name>
    <dbReference type="NCBI Taxonomy" id="339671"/>
    <lineage>
        <taxon>Bacteria</taxon>
        <taxon>Pseudomonadati</taxon>
        <taxon>Pseudomonadota</taxon>
        <taxon>Gammaproteobacteria</taxon>
        <taxon>Pasteurellales</taxon>
        <taxon>Pasteurellaceae</taxon>
        <taxon>Actinobacillus</taxon>
    </lineage>
</organism>